<proteinExistence type="evidence at transcript level"/>
<reference key="1">
    <citation type="journal article" date="2013" name="Nature">
        <title>The zebrafish reference genome sequence and its relationship to the human genome.</title>
        <authorList>
            <person name="Howe K."/>
            <person name="Clark M.D."/>
            <person name="Torroja C.F."/>
            <person name="Torrance J."/>
            <person name="Berthelot C."/>
            <person name="Muffato M."/>
            <person name="Collins J.E."/>
            <person name="Humphray S."/>
            <person name="McLaren K."/>
            <person name="Matthews L."/>
            <person name="McLaren S."/>
            <person name="Sealy I."/>
            <person name="Caccamo M."/>
            <person name="Churcher C."/>
            <person name="Scott C."/>
            <person name="Barrett J.C."/>
            <person name="Koch R."/>
            <person name="Rauch G.J."/>
            <person name="White S."/>
            <person name="Chow W."/>
            <person name="Kilian B."/>
            <person name="Quintais L.T."/>
            <person name="Guerra-Assuncao J.A."/>
            <person name="Zhou Y."/>
            <person name="Gu Y."/>
            <person name="Yen J."/>
            <person name="Vogel J.H."/>
            <person name="Eyre T."/>
            <person name="Redmond S."/>
            <person name="Banerjee R."/>
            <person name="Chi J."/>
            <person name="Fu B."/>
            <person name="Langley E."/>
            <person name="Maguire S.F."/>
            <person name="Laird G.K."/>
            <person name="Lloyd D."/>
            <person name="Kenyon E."/>
            <person name="Donaldson S."/>
            <person name="Sehra H."/>
            <person name="Almeida-King J."/>
            <person name="Loveland J."/>
            <person name="Trevanion S."/>
            <person name="Jones M."/>
            <person name="Quail M."/>
            <person name="Willey D."/>
            <person name="Hunt A."/>
            <person name="Burton J."/>
            <person name="Sims S."/>
            <person name="McLay K."/>
            <person name="Plumb B."/>
            <person name="Davis J."/>
            <person name="Clee C."/>
            <person name="Oliver K."/>
            <person name="Clark R."/>
            <person name="Riddle C."/>
            <person name="Elliot D."/>
            <person name="Threadgold G."/>
            <person name="Harden G."/>
            <person name="Ware D."/>
            <person name="Begum S."/>
            <person name="Mortimore B."/>
            <person name="Kerry G."/>
            <person name="Heath P."/>
            <person name="Phillimore B."/>
            <person name="Tracey A."/>
            <person name="Corby N."/>
            <person name="Dunn M."/>
            <person name="Johnson C."/>
            <person name="Wood J."/>
            <person name="Clark S."/>
            <person name="Pelan S."/>
            <person name="Griffiths G."/>
            <person name="Smith M."/>
            <person name="Glithero R."/>
            <person name="Howden P."/>
            <person name="Barker N."/>
            <person name="Lloyd C."/>
            <person name="Stevens C."/>
            <person name="Harley J."/>
            <person name="Holt K."/>
            <person name="Panagiotidis G."/>
            <person name="Lovell J."/>
            <person name="Beasley H."/>
            <person name="Henderson C."/>
            <person name="Gordon D."/>
            <person name="Auger K."/>
            <person name="Wright D."/>
            <person name="Collins J."/>
            <person name="Raisen C."/>
            <person name="Dyer L."/>
            <person name="Leung K."/>
            <person name="Robertson L."/>
            <person name="Ambridge K."/>
            <person name="Leongamornlert D."/>
            <person name="McGuire S."/>
            <person name="Gilderthorp R."/>
            <person name="Griffiths C."/>
            <person name="Manthravadi D."/>
            <person name="Nichol S."/>
            <person name="Barker G."/>
            <person name="Whitehead S."/>
            <person name="Kay M."/>
            <person name="Brown J."/>
            <person name="Murnane C."/>
            <person name="Gray E."/>
            <person name="Humphries M."/>
            <person name="Sycamore N."/>
            <person name="Barker D."/>
            <person name="Saunders D."/>
            <person name="Wallis J."/>
            <person name="Babbage A."/>
            <person name="Hammond S."/>
            <person name="Mashreghi-Mohammadi M."/>
            <person name="Barr L."/>
            <person name="Martin S."/>
            <person name="Wray P."/>
            <person name="Ellington A."/>
            <person name="Matthews N."/>
            <person name="Ellwood M."/>
            <person name="Woodmansey R."/>
            <person name="Clark G."/>
            <person name="Cooper J."/>
            <person name="Tromans A."/>
            <person name="Grafham D."/>
            <person name="Skuce C."/>
            <person name="Pandian R."/>
            <person name="Andrews R."/>
            <person name="Harrison E."/>
            <person name="Kimberley A."/>
            <person name="Garnett J."/>
            <person name="Fosker N."/>
            <person name="Hall R."/>
            <person name="Garner P."/>
            <person name="Kelly D."/>
            <person name="Bird C."/>
            <person name="Palmer S."/>
            <person name="Gehring I."/>
            <person name="Berger A."/>
            <person name="Dooley C.M."/>
            <person name="Ersan-Urun Z."/>
            <person name="Eser C."/>
            <person name="Geiger H."/>
            <person name="Geisler M."/>
            <person name="Karotki L."/>
            <person name="Kirn A."/>
            <person name="Konantz J."/>
            <person name="Konantz M."/>
            <person name="Oberlander M."/>
            <person name="Rudolph-Geiger S."/>
            <person name="Teucke M."/>
            <person name="Lanz C."/>
            <person name="Raddatz G."/>
            <person name="Osoegawa K."/>
            <person name="Zhu B."/>
            <person name="Rapp A."/>
            <person name="Widaa S."/>
            <person name="Langford C."/>
            <person name="Yang F."/>
            <person name="Schuster S.C."/>
            <person name="Carter N.P."/>
            <person name="Harrow J."/>
            <person name="Ning Z."/>
            <person name="Herrero J."/>
            <person name="Searle S.M."/>
            <person name="Enright A."/>
            <person name="Geisler R."/>
            <person name="Plasterk R.H."/>
            <person name="Lee C."/>
            <person name="Westerfield M."/>
            <person name="de Jong P.J."/>
            <person name="Zon L.I."/>
            <person name="Postlethwait J.H."/>
            <person name="Nusslein-Volhard C."/>
            <person name="Hubbard T.J."/>
            <person name="Roest Crollius H."/>
            <person name="Rogers J."/>
            <person name="Stemple D.L."/>
        </authorList>
    </citation>
    <scope>NUCLEOTIDE SEQUENCE [LARGE SCALE GENOMIC DNA]</scope>
    <source>
        <strain>Tuebingen</strain>
    </source>
</reference>
<reference key="2">
    <citation type="submission" date="2007-03" db="EMBL/GenBank/DDBJ databases">
        <authorList>
            <consortium name="NIH - Zebrafish Gene Collection (ZGC) project"/>
        </authorList>
    </citation>
    <scope>NUCLEOTIDE SEQUENCE [LARGE SCALE MRNA]</scope>
</reference>
<reference key="3">
    <citation type="journal article" date="2007" name="Am. J. Physiol.">
        <title>Visualization in zebrafish larvae of Na(+) uptake in mitochondria-rich cells whose differentiation is dependent on foxi3a.</title>
        <authorList>
            <person name="Esaki M."/>
            <person name="Hoshijima K."/>
            <person name="Kobayashi S."/>
            <person name="Fukuda H."/>
            <person name="Kawakami K."/>
            <person name="Hirose S."/>
        </authorList>
    </citation>
    <scope>FUNCTION</scope>
    <scope>DEVELOPMENTAL STAGE</scope>
</reference>
<reference key="4">
    <citation type="journal article" date="2007" name="Dev. Biol.">
        <title>Foxi3 transcription factors and Notch signaling control the formation of skin ionocytes from epidermal precursors of the zebrafish embryo.</title>
        <authorList>
            <person name="Jaenicke M."/>
            <person name="Carney T.J."/>
            <person name="Hammerschmidt M."/>
        </authorList>
    </citation>
    <scope>FUNCTION</scope>
    <scope>TISSUE SPECIFICITY</scope>
</reference>
<reference key="5">
    <citation type="journal article" date="2007" name="PLoS ONE">
        <title>A positive regulatory loop between foxi3a and foxi3b is essential for specification and differentiation of zebrafish epidermal ionocytes.</title>
        <authorList>
            <person name="Hsiao C.D."/>
            <person name="You M.S."/>
            <person name="Guh Y.J."/>
            <person name="Ma M."/>
            <person name="Jiang Y.J."/>
            <person name="Hwang P.P."/>
        </authorList>
    </citation>
    <scope>FUNCTION</scope>
</reference>
<dbReference type="EMBL" id="CR749164">
    <property type="status" value="NOT_ANNOTATED_CDS"/>
    <property type="molecule type" value="Genomic_DNA"/>
</dbReference>
<dbReference type="EMBL" id="BC133872">
    <property type="protein sequence ID" value="AAI33873.1"/>
    <property type="molecule type" value="mRNA"/>
</dbReference>
<dbReference type="RefSeq" id="NP_944599.2">
    <property type="nucleotide sequence ID" value="NM_198917.2"/>
</dbReference>
<dbReference type="SMR" id="A3KNJ3"/>
<dbReference type="GeneID" id="387257"/>
<dbReference type="KEGG" id="dre:387257"/>
<dbReference type="AGR" id="ZFIN:ZDB-GENE-031126-3"/>
<dbReference type="CTD" id="387257"/>
<dbReference type="ZFIN" id="ZDB-GENE-031126-3">
    <property type="gene designation" value="foxi3a"/>
</dbReference>
<dbReference type="OrthoDB" id="5954824at2759"/>
<dbReference type="PRO" id="PR:A3KNJ3"/>
<dbReference type="Proteomes" id="UP000000437">
    <property type="component" value="Chromosome 21"/>
</dbReference>
<dbReference type="GO" id="GO:0005634">
    <property type="term" value="C:nucleus"/>
    <property type="evidence" value="ECO:0000250"/>
    <property type="project" value="UniProtKB"/>
</dbReference>
<dbReference type="GO" id="GO:0000981">
    <property type="term" value="F:DNA-binding transcription factor activity, RNA polymerase II-specific"/>
    <property type="evidence" value="ECO:0000250"/>
    <property type="project" value="UniProtKB"/>
</dbReference>
<dbReference type="GO" id="GO:0000978">
    <property type="term" value="F:RNA polymerase II cis-regulatory region sequence-specific DNA binding"/>
    <property type="evidence" value="ECO:0000318"/>
    <property type="project" value="GO_Central"/>
</dbReference>
<dbReference type="GO" id="GO:0009653">
    <property type="term" value="P:anatomical structure morphogenesis"/>
    <property type="evidence" value="ECO:0000318"/>
    <property type="project" value="GO_Central"/>
</dbReference>
<dbReference type="GO" id="GO:0030154">
    <property type="term" value="P:cell differentiation"/>
    <property type="evidence" value="ECO:0000318"/>
    <property type="project" value="GO_Central"/>
</dbReference>
<dbReference type="GO" id="GO:0009913">
    <property type="term" value="P:epidermal cell differentiation"/>
    <property type="evidence" value="ECO:0000315"/>
    <property type="project" value="ZFIN"/>
</dbReference>
<dbReference type="GO" id="GO:0009957">
    <property type="term" value="P:epidermal cell fate specification"/>
    <property type="evidence" value="ECO:0000314"/>
    <property type="project" value="ZFIN"/>
</dbReference>
<dbReference type="GO" id="GO:0062236">
    <property type="term" value="P:ionocyte differentiation"/>
    <property type="evidence" value="ECO:0000315"/>
    <property type="project" value="ZFIN"/>
</dbReference>
<dbReference type="GO" id="GO:0050891">
    <property type="term" value="P:multicellular organismal-level water homeostasis"/>
    <property type="evidence" value="ECO:0000315"/>
    <property type="project" value="ZFIN"/>
</dbReference>
<dbReference type="GO" id="GO:0006357">
    <property type="term" value="P:regulation of transcription by RNA polymerase II"/>
    <property type="evidence" value="ECO:0000318"/>
    <property type="project" value="GO_Central"/>
</dbReference>
<dbReference type="CDD" id="cd20053">
    <property type="entry name" value="FH_FOXI1"/>
    <property type="match status" value="1"/>
</dbReference>
<dbReference type="FunFam" id="1.10.10.10:FF:000016">
    <property type="entry name" value="Forkhead box protein I1"/>
    <property type="match status" value="1"/>
</dbReference>
<dbReference type="Gene3D" id="1.10.10.10">
    <property type="entry name" value="Winged helix-like DNA-binding domain superfamily/Winged helix DNA-binding domain"/>
    <property type="match status" value="1"/>
</dbReference>
<dbReference type="InterPro" id="IPR001766">
    <property type="entry name" value="Fork_head_dom"/>
</dbReference>
<dbReference type="InterPro" id="IPR050211">
    <property type="entry name" value="FOX_domain-containing"/>
</dbReference>
<dbReference type="InterPro" id="IPR018122">
    <property type="entry name" value="TF_fork_head_CS_1"/>
</dbReference>
<dbReference type="InterPro" id="IPR030456">
    <property type="entry name" value="TF_fork_head_CS_2"/>
</dbReference>
<dbReference type="InterPro" id="IPR036388">
    <property type="entry name" value="WH-like_DNA-bd_sf"/>
</dbReference>
<dbReference type="InterPro" id="IPR036390">
    <property type="entry name" value="WH_DNA-bd_sf"/>
</dbReference>
<dbReference type="PANTHER" id="PTHR11829:SF383">
    <property type="entry name" value="FORKHEAD BOX I2-RELATED"/>
    <property type="match status" value="1"/>
</dbReference>
<dbReference type="PANTHER" id="PTHR11829">
    <property type="entry name" value="FORKHEAD BOX PROTEIN"/>
    <property type="match status" value="1"/>
</dbReference>
<dbReference type="Pfam" id="PF00250">
    <property type="entry name" value="Forkhead"/>
    <property type="match status" value="1"/>
</dbReference>
<dbReference type="PRINTS" id="PR00053">
    <property type="entry name" value="FORKHEAD"/>
</dbReference>
<dbReference type="SMART" id="SM00339">
    <property type="entry name" value="FH"/>
    <property type="match status" value="1"/>
</dbReference>
<dbReference type="SUPFAM" id="SSF46785">
    <property type="entry name" value="Winged helix' DNA-binding domain"/>
    <property type="match status" value="1"/>
</dbReference>
<dbReference type="PROSITE" id="PS00657">
    <property type="entry name" value="FORK_HEAD_1"/>
    <property type="match status" value="1"/>
</dbReference>
<dbReference type="PROSITE" id="PS00658">
    <property type="entry name" value="FORK_HEAD_2"/>
    <property type="match status" value="1"/>
</dbReference>
<dbReference type="PROSITE" id="PS50039">
    <property type="entry name" value="FORK_HEAD_3"/>
    <property type="match status" value="1"/>
</dbReference>
<sequence length="353" mass="38759">MTSFVPQSLSPQFHSMGQESQEFSLYGDNFYSAQHVPSPQQTLPSAYDFGEYAGQTSNPYLWFNGPGLSPAPCLTTGPQHYGMAKQYVGASGIGGSEGAFSWFSLPSQEDLMKLVRPPYSYSALIAMAIHGAPNRRLTLSQIYQYVADNFPFYNKSKASWQNSIRHNLSLNDCFMKVPRDDSDPGKGNYWTLDPNCEKMFDNGNFRRKRKRKSDSLAEEEGKGYSGSDSALSSPKNPSDSSERGNSPISTDQAPCLNSFLNQMGDVASGSREALLPSPLAVPLSQRSSPTGVYGSYSPNATMPQWETQIPQSSISSTPYKDGYSDSMLNPYSSQLYPVLGSSDLLYPREGSEV</sequence>
<name>FXI3A_DANRE</name>
<comment type="function">
    <text evidence="4 5 6">Transcription factor required for epithelial cell differentiation (PubMed:16946087, PubMed:17375188, PubMed:17555741). Involved in specification of skin ionocytes from epidermal precursors (PubMed:16946087, PubMed:17375188, PubMed:17555741).</text>
</comment>
<comment type="subcellular location">
    <subcellularLocation>
        <location evidence="1">Nucleus</location>
    </subcellularLocation>
</comment>
<comment type="tissue specificity">
    <text evidence="6">Expressed in ionocyte precursors.</text>
</comment>
<comment type="developmental stage">
    <text evidence="4">Expressed at the gastrula stage in the presumptive ectoderm.</text>
</comment>
<keyword id="KW-0217">Developmental protein</keyword>
<keyword id="KW-0238">DNA-binding</keyword>
<keyword id="KW-0539">Nucleus</keyword>
<keyword id="KW-1185">Reference proteome</keyword>
<keyword id="KW-0804">Transcription</keyword>
<keyword id="KW-0805">Transcription regulation</keyword>
<protein>
    <recommendedName>
        <fullName evidence="8">Forkhead box protein I3-A</fullName>
    </recommendedName>
</protein>
<accession>A3KNJ3</accession>
<organism>
    <name type="scientific">Danio rerio</name>
    <name type="common">Zebrafish</name>
    <name type="synonym">Brachydanio rerio</name>
    <dbReference type="NCBI Taxonomy" id="7955"/>
    <lineage>
        <taxon>Eukaryota</taxon>
        <taxon>Metazoa</taxon>
        <taxon>Chordata</taxon>
        <taxon>Craniata</taxon>
        <taxon>Vertebrata</taxon>
        <taxon>Euteleostomi</taxon>
        <taxon>Actinopterygii</taxon>
        <taxon>Neopterygii</taxon>
        <taxon>Teleostei</taxon>
        <taxon>Ostariophysi</taxon>
        <taxon>Cypriniformes</taxon>
        <taxon>Danionidae</taxon>
        <taxon>Danioninae</taxon>
        <taxon>Danio</taxon>
    </lineage>
</organism>
<gene>
    <name evidence="7 9" type="primary">foxi3a</name>
</gene>
<feature type="chain" id="PRO_0000458756" description="Forkhead box protein I3-A">
    <location>
        <begin position="1"/>
        <end position="353"/>
    </location>
</feature>
<feature type="DNA-binding region" description="Fork-head" evidence="2">
    <location>
        <begin position="116"/>
        <end position="210"/>
    </location>
</feature>
<feature type="region of interest" description="Disordered" evidence="3">
    <location>
        <begin position="201"/>
        <end position="255"/>
    </location>
</feature>
<feature type="short sequence motif" description="Nuclear localization signal" evidence="1">
    <location>
        <begin position="206"/>
        <end position="212"/>
    </location>
</feature>
<feature type="compositionally biased region" description="Basic and acidic residues" evidence="3">
    <location>
        <begin position="213"/>
        <end position="222"/>
    </location>
</feature>
<feature type="compositionally biased region" description="Polar residues" evidence="3">
    <location>
        <begin position="226"/>
        <end position="252"/>
    </location>
</feature>
<evidence type="ECO:0000250" key="1">
    <source>
        <dbReference type="UniProtKB" id="A8MTJ6"/>
    </source>
</evidence>
<evidence type="ECO:0000255" key="2">
    <source>
        <dbReference type="PROSITE-ProRule" id="PRU00089"/>
    </source>
</evidence>
<evidence type="ECO:0000256" key="3">
    <source>
        <dbReference type="SAM" id="MobiDB-lite"/>
    </source>
</evidence>
<evidence type="ECO:0000269" key="4">
    <source>
    </source>
</evidence>
<evidence type="ECO:0000269" key="5">
    <source>
    </source>
</evidence>
<evidence type="ECO:0000269" key="6">
    <source>
    </source>
</evidence>
<evidence type="ECO:0000303" key="7">
    <source>
    </source>
</evidence>
<evidence type="ECO:0000305" key="8"/>
<evidence type="ECO:0000312" key="9">
    <source>
        <dbReference type="ZFIN" id="ZDB-GENE-031126-3"/>
    </source>
</evidence>